<sequence length="314" mass="35727">MRPEGSLTYRVPERLRQGFCGVGRAAQALVCASAKEGTAFRMEAVQEGAAGVESEQAALGEEAVLLLDDIMAEVEVVAEVEVVAEEEGLVERREEAQRAQQAVPGPGPMTPESALEELLAVQVELEPVNAQARKAFSRQREKMERRRKPHLDRRGAVIQSVPGFWANVIANHPQMSALITDEDEDMLSYMVSLEVEEEKHPVHLCKIMLFFRSNPYFQNKVITKEYLVNITEYRASHSTPIEWYPDYEVEAYRRRHHNSSLNFFNWFSDHNFAGSNKIAEILCKDLWRNPLQYYKRMKPPEEGTETSGDSQLLS</sequence>
<dbReference type="EMBL" id="AC006158">
    <property type="status" value="NOT_ANNOTATED_CDS"/>
    <property type="molecule type" value="Genomic_DNA"/>
</dbReference>
<dbReference type="CCDS" id="CCDS48202.1"/>
<dbReference type="RefSeq" id="NP_001157943.1">
    <property type="nucleotide sequence ID" value="NM_001164471.2"/>
</dbReference>
<dbReference type="SMR" id="P0CV99"/>
<dbReference type="FunCoup" id="P0CV99">
    <property type="interactions" value="51"/>
</dbReference>
<dbReference type="STRING" id="9606.ENSP00000499192"/>
<dbReference type="BioMuta" id="TSPY4"/>
<dbReference type="DMDM" id="332321775"/>
<dbReference type="jPOST" id="P0CV99"/>
<dbReference type="MassIVE" id="P0CV99"/>
<dbReference type="PeptideAtlas" id="P0CV99"/>
<dbReference type="Antibodypedia" id="71183">
    <property type="antibodies" value="4 antibodies from 4 providers"/>
</dbReference>
<dbReference type="DNASU" id="728395"/>
<dbReference type="Ensembl" id="ENST00000426950.6">
    <property type="protein sequence ID" value="ENSP00000399668.2"/>
    <property type="gene ID" value="ENSG00000233803.9"/>
</dbReference>
<dbReference type="Ensembl" id="ENST00000707597.1">
    <property type="protein sequence ID" value="ENSP00000516920.1"/>
    <property type="gene ID" value="ENSG00000291458.1"/>
</dbReference>
<dbReference type="GeneID" id="728395"/>
<dbReference type="KEGG" id="hsa:728395"/>
<dbReference type="MANE-Select" id="ENST00000426950.6">
    <property type="protein sequence ID" value="ENSP00000399668.2"/>
    <property type="RefSeq nucleotide sequence ID" value="NM_001164471.2"/>
    <property type="RefSeq protein sequence ID" value="NP_001157943.1"/>
</dbReference>
<dbReference type="AGR" id="HGNC:37287"/>
<dbReference type="CTD" id="728395"/>
<dbReference type="GeneCards" id="TSPY4"/>
<dbReference type="HGNC" id="HGNC:37287">
    <property type="gene designation" value="TSPY4"/>
</dbReference>
<dbReference type="HPA" id="ENSG00000233803">
    <property type="expression patterns" value="Tissue enriched (testis)"/>
</dbReference>
<dbReference type="neXtProt" id="NX_P0CV99"/>
<dbReference type="VEuPathDB" id="HostDB:ENSG00000233803"/>
<dbReference type="GeneTree" id="ENSGT00940000162417"/>
<dbReference type="HOGENOM" id="CLU_051687_1_0_1"/>
<dbReference type="InParanoid" id="P0CV99"/>
<dbReference type="OMA" id="EMIVKEY"/>
<dbReference type="PAN-GO" id="P0CV99">
    <property type="GO annotations" value="4 GO annotations based on evolutionary models"/>
</dbReference>
<dbReference type="PhylomeDB" id="P0CV99"/>
<dbReference type="TreeFam" id="TF313386"/>
<dbReference type="BioGRID-ORCS" id="728395">
    <property type="hits" value="9 hits in 180 CRISPR screens"/>
</dbReference>
<dbReference type="GenomeRNAi" id="728395"/>
<dbReference type="Pharos" id="P0CV99">
    <property type="development level" value="Tdark"/>
</dbReference>
<dbReference type="PRO" id="PR:P0CV99"/>
<dbReference type="Proteomes" id="UP000005640">
    <property type="component" value="Chromosome Y"/>
</dbReference>
<dbReference type="RNAct" id="P0CV99">
    <property type="molecule type" value="protein"/>
</dbReference>
<dbReference type="Bgee" id="ENSG00000233803">
    <property type="expression patterns" value="Expressed in primordial germ cell in gonad and 29 other cell types or tissues"/>
</dbReference>
<dbReference type="ExpressionAtlas" id="P0CV99">
    <property type="expression patterns" value="baseline"/>
</dbReference>
<dbReference type="GO" id="GO:0000785">
    <property type="term" value="C:chromatin"/>
    <property type="evidence" value="ECO:0000318"/>
    <property type="project" value="GO_Central"/>
</dbReference>
<dbReference type="GO" id="GO:0005737">
    <property type="term" value="C:cytoplasm"/>
    <property type="evidence" value="ECO:0007669"/>
    <property type="project" value="UniProtKB-SubCell"/>
</dbReference>
<dbReference type="GO" id="GO:0005634">
    <property type="term" value="C:nucleus"/>
    <property type="evidence" value="ECO:0000318"/>
    <property type="project" value="GO_Central"/>
</dbReference>
<dbReference type="GO" id="GO:0003682">
    <property type="term" value="F:chromatin binding"/>
    <property type="evidence" value="ECO:0000318"/>
    <property type="project" value="GO_Central"/>
</dbReference>
<dbReference type="GO" id="GO:0042393">
    <property type="term" value="F:histone binding"/>
    <property type="evidence" value="ECO:0000318"/>
    <property type="project" value="GO_Central"/>
</dbReference>
<dbReference type="GO" id="GO:0030154">
    <property type="term" value="P:cell differentiation"/>
    <property type="evidence" value="ECO:0007669"/>
    <property type="project" value="UniProtKB-KW"/>
</dbReference>
<dbReference type="GO" id="GO:0007506">
    <property type="term" value="P:gonadal mesoderm development"/>
    <property type="evidence" value="ECO:0007669"/>
    <property type="project" value="UniProtKB-KW"/>
</dbReference>
<dbReference type="GO" id="GO:0006334">
    <property type="term" value="P:nucleosome assembly"/>
    <property type="evidence" value="ECO:0007669"/>
    <property type="project" value="InterPro"/>
</dbReference>
<dbReference type="GO" id="GO:0007283">
    <property type="term" value="P:spermatogenesis"/>
    <property type="evidence" value="ECO:0007669"/>
    <property type="project" value="UniProtKB-KW"/>
</dbReference>
<dbReference type="FunFam" id="3.30.1120.90:FF:000002">
    <property type="entry name" value="Testis-specific Y-encoded-like protein 2"/>
    <property type="match status" value="1"/>
</dbReference>
<dbReference type="Gene3D" id="1.20.5.1500">
    <property type="match status" value="1"/>
</dbReference>
<dbReference type="Gene3D" id="3.30.1120.90">
    <property type="entry name" value="Nucleosome assembly protein"/>
    <property type="match status" value="1"/>
</dbReference>
<dbReference type="InterPro" id="IPR037231">
    <property type="entry name" value="NAP-like_sf"/>
</dbReference>
<dbReference type="InterPro" id="IPR002164">
    <property type="entry name" value="NAP_family"/>
</dbReference>
<dbReference type="PANTHER" id="PTHR11875">
    <property type="entry name" value="TESTIS-SPECIFIC Y-ENCODED PROTEIN"/>
    <property type="match status" value="1"/>
</dbReference>
<dbReference type="Pfam" id="PF00956">
    <property type="entry name" value="NAP"/>
    <property type="match status" value="1"/>
</dbReference>
<dbReference type="SUPFAM" id="SSF143113">
    <property type="entry name" value="NAP-like"/>
    <property type="match status" value="1"/>
</dbReference>
<keyword id="KW-0963">Cytoplasm</keyword>
<keyword id="KW-0217">Developmental protein</keyword>
<keyword id="KW-0221">Differentiation</keyword>
<keyword id="KW-0334">Gonadal differentiation</keyword>
<keyword id="KW-0539">Nucleus</keyword>
<keyword id="KW-1185">Reference proteome</keyword>
<keyword id="KW-0744">Spermatogenesis</keyword>
<protein>
    <recommendedName>
        <fullName>Testis-specific Y-encoded protein 4</fullName>
    </recommendedName>
</protein>
<gene>
    <name type="primary">TSPY4</name>
</gene>
<evidence type="ECO:0000250" key="1">
    <source>
        <dbReference type="UniProtKB" id="Q01534"/>
    </source>
</evidence>
<evidence type="ECO:0000269" key="2">
    <source>
    </source>
</evidence>
<evidence type="ECO:0000305" key="3"/>
<comment type="function">
    <text evidence="1">May be involved in sperm differentiation and proliferation.</text>
</comment>
<comment type="subcellular location">
    <subcellularLocation>
        <location evidence="1">Cytoplasm</location>
    </subcellularLocation>
    <subcellularLocation>
        <location evidence="1">Nucleus</location>
    </subcellularLocation>
</comment>
<comment type="polymorphism">
    <text evidence="2">Maps to a tandemly repeated region on chromosome Yp11; additionally at least one copy is reported originating from Yq. The gene is thought to be present with an inter-individual variation in copy number and between 20 and 60 copies per Y chromosome are expected. 35 tandemly repeated gene copies on Yp11 originating from one individual have been reported (PubMed:12815422).</text>
</comment>
<comment type="similarity">
    <text evidence="3">Belongs to the nucleosome assembly protein (NAP) family.</text>
</comment>
<feature type="chain" id="PRO_0000408002" description="Testis-specific Y-encoded protein 4">
    <location>
        <begin position="1"/>
        <end position="314"/>
    </location>
</feature>
<organism>
    <name type="scientific">Homo sapiens</name>
    <name type="common">Human</name>
    <dbReference type="NCBI Taxonomy" id="9606"/>
    <lineage>
        <taxon>Eukaryota</taxon>
        <taxon>Metazoa</taxon>
        <taxon>Chordata</taxon>
        <taxon>Craniata</taxon>
        <taxon>Vertebrata</taxon>
        <taxon>Euteleostomi</taxon>
        <taxon>Mammalia</taxon>
        <taxon>Eutheria</taxon>
        <taxon>Euarchontoglires</taxon>
        <taxon>Primates</taxon>
        <taxon>Haplorrhini</taxon>
        <taxon>Catarrhini</taxon>
        <taxon>Hominidae</taxon>
        <taxon>Homo</taxon>
    </lineage>
</organism>
<accession>P0CV99</accession>
<name>TSPY4_HUMAN</name>
<proteinExistence type="inferred from homology"/>
<reference key="1">
    <citation type="journal article" date="2003" name="Nature">
        <title>The male-specific region of the human Y chromosome is a mosaic of discrete sequence classes.</title>
        <authorList>
            <person name="Skaletsky H."/>
            <person name="Kuroda-Kawaguchi T."/>
            <person name="Minx P.J."/>
            <person name="Cordum H.S."/>
            <person name="Hillier L.W."/>
            <person name="Brown L.G."/>
            <person name="Repping S."/>
            <person name="Pyntikova T."/>
            <person name="Ali J."/>
            <person name="Bieri T."/>
            <person name="Chinwalla A."/>
            <person name="Delehaunty A."/>
            <person name="Delehaunty K."/>
            <person name="Du H."/>
            <person name="Fewell G."/>
            <person name="Fulton L."/>
            <person name="Fulton R."/>
            <person name="Graves T.A."/>
            <person name="Hou S.-F."/>
            <person name="Latrielle P."/>
            <person name="Leonard S."/>
            <person name="Mardis E."/>
            <person name="Maupin R."/>
            <person name="McPherson J."/>
            <person name="Miner T."/>
            <person name="Nash W."/>
            <person name="Nguyen C."/>
            <person name="Ozersky P."/>
            <person name="Pepin K."/>
            <person name="Rock S."/>
            <person name="Rohlfing T."/>
            <person name="Scott K."/>
            <person name="Schultz B."/>
            <person name="Strong C."/>
            <person name="Tin-Wollam A."/>
            <person name="Yang S.-P."/>
            <person name="Waterston R.H."/>
            <person name="Wilson R.K."/>
            <person name="Rozen S."/>
            <person name="Page D.C."/>
        </authorList>
    </citation>
    <scope>NUCLEOTIDE SEQUENCE [LARGE SCALE GENOMIC DNA]</scope>
</reference>